<dbReference type="EC" id="4.2.2.2"/>
<dbReference type="EMBL" id="M62961">
    <property type="protein sequence ID" value="AAA32668.1"/>
    <property type="molecule type" value="mRNA"/>
</dbReference>
<dbReference type="EMBL" id="M80560">
    <property type="protein sequence ID" value="AAA32669.1"/>
    <property type="status" value="ALT_SEQ"/>
    <property type="molecule type" value="mRNA"/>
</dbReference>
<dbReference type="PIR" id="C39099">
    <property type="entry name" value="C39099"/>
</dbReference>
<dbReference type="PIR" id="C53240">
    <property type="entry name" value="C53240"/>
</dbReference>
<dbReference type="SMR" id="P27761"/>
<dbReference type="Allergome" id="24">
    <property type="allergen name" value="Amb a 1"/>
</dbReference>
<dbReference type="Allergome" id="789">
    <property type="allergen name" value="Amb a 1.0301"/>
</dbReference>
<dbReference type="CAZy" id="PL1">
    <property type="family name" value="Polysaccharide Lyase Family 1"/>
</dbReference>
<dbReference type="UniPathway" id="UPA00545">
    <property type="reaction ID" value="UER00824"/>
</dbReference>
<dbReference type="GO" id="GO:0046872">
    <property type="term" value="F:metal ion binding"/>
    <property type="evidence" value="ECO:0007669"/>
    <property type="project" value="UniProtKB-KW"/>
</dbReference>
<dbReference type="GO" id="GO:0030570">
    <property type="term" value="F:pectate lyase activity"/>
    <property type="evidence" value="ECO:0007669"/>
    <property type="project" value="UniProtKB-EC"/>
</dbReference>
<dbReference type="GO" id="GO:0045490">
    <property type="term" value="P:pectin catabolic process"/>
    <property type="evidence" value="ECO:0007669"/>
    <property type="project" value="UniProtKB-UniPathway"/>
</dbReference>
<dbReference type="Gene3D" id="2.160.20.10">
    <property type="entry name" value="Single-stranded right-handed beta-helix, Pectin lyase-like"/>
    <property type="match status" value="1"/>
</dbReference>
<dbReference type="InterPro" id="IPR018082">
    <property type="entry name" value="AmbAllergen"/>
</dbReference>
<dbReference type="InterPro" id="IPR002022">
    <property type="entry name" value="Pec_lyase"/>
</dbReference>
<dbReference type="InterPro" id="IPR012334">
    <property type="entry name" value="Pectin_lyas_fold"/>
</dbReference>
<dbReference type="InterPro" id="IPR011050">
    <property type="entry name" value="Pectin_lyase_fold/virulence"/>
</dbReference>
<dbReference type="InterPro" id="IPR045032">
    <property type="entry name" value="PEL"/>
</dbReference>
<dbReference type="PANTHER" id="PTHR31683:SF159">
    <property type="entry name" value="PECTATE LYASE"/>
    <property type="match status" value="1"/>
</dbReference>
<dbReference type="PANTHER" id="PTHR31683">
    <property type="entry name" value="PECTATE LYASE 18-RELATED"/>
    <property type="match status" value="1"/>
</dbReference>
<dbReference type="Pfam" id="PF00544">
    <property type="entry name" value="Pectate_lyase_4"/>
    <property type="match status" value="1"/>
</dbReference>
<dbReference type="PRINTS" id="PR00807">
    <property type="entry name" value="AMBALLERGEN"/>
</dbReference>
<dbReference type="SMART" id="SM00656">
    <property type="entry name" value="Amb_all"/>
    <property type="match status" value="1"/>
</dbReference>
<dbReference type="SUPFAM" id="SSF51126">
    <property type="entry name" value="Pectin lyase-like"/>
    <property type="match status" value="1"/>
</dbReference>
<comment type="function">
    <text evidence="1">Has pectate lyase activity.</text>
</comment>
<comment type="catalytic activity">
    <reaction>
        <text>Eliminative cleavage of (1-&gt;4)-alpha-D-galacturonan to give oligosaccharides with 4-deoxy-alpha-D-galact-4-enuronosyl groups at their non-reducing ends.</text>
        <dbReference type="EC" id="4.2.2.2"/>
    </reaction>
</comment>
<comment type="cofactor">
    <cofactor evidence="1">
        <name>Ca(2+)</name>
        <dbReference type="ChEBI" id="CHEBI:29108"/>
    </cofactor>
    <text evidence="1">Binds 1 Ca(2+) ion.</text>
</comment>
<comment type="pathway">
    <text>Glycan metabolism; pectin degradation; 2-dehydro-3-deoxy-D-gluconate from pectin: step 2/5.</text>
</comment>
<comment type="subunit">
    <text>Monomer.</text>
</comment>
<comment type="tissue specificity">
    <text>Pollen and flowers.</text>
</comment>
<comment type="PTM">
    <text>The N-terminus is blocked.</text>
</comment>
<comment type="allergen">
    <text evidence="3">Causes an allergic reaction in human. This is one of the major allergens of the ragweed pollen.</text>
</comment>
<comment type="similarity">
    <text evidence="4">Belongs to the polysaccharide lyase 1 family. Amb a subfamily.</text>
</comment>
<evidence type="ECO:0000250" key="1"/>
<evidence type="ECO:0000255" key="2"/>
<evidence type="ECO:0000269" key="3">
    <source>
    </source>
</evidence>
<evidence type="ECO:0000305" key="4"/>
<sequence>MGIKQCCYILYFTLALVALLQPVRSAEGVGEILPSVNETRSLQACEALNIIDKCWRGKADWENNRQALADCAQGFAKGTYGGKWGDVYTVTSNLDDDVANPKEGTLRFAAAQNRPLWIIFKNDMVINLNQELVVNSDKTIDGRGVKVEIINGGLTLMNVKNIIIHNINIHDVKVLPGGMIKSNDGPPILRQASDGDTINVAGSSQIWIDHCSLSKSFDGLVDVTLGSTHVTISNCKFTQQSKAILLGADDTHVQDKGMLATVAFNMFTDNVDQRMPRCRFGFFQVVNNNYDRWGTYAIGGSSAPTILCQGNRFLAPDDQIKKNVLARTGTGAAESMAWNWRSDKDLLENGAIFVTSGSDPVLTPVQSAGMIPAEPGEAAIKLTSSAGVFSCHPGAPC</sequence>
<accession>P27761</accession>
<keyword id="KW-0020">Allergen</keyword>
<keyword id="KW-0106">Calcium</keyword>
<keyword id="KW-1015">Disulfide bond</keyword>
<keyword id="KW-0325">Glycoprotein</keyword>
<keyword id="KW-0456">Lyase</keyword>
<keyword id="KW-0479">Metal-binding</keyword>
<keyword id="KW-0732">Signal</keyword>
<protein>
    <recommendedName>
        <fullName>Pectate lyase 2</fullName>
        <ecNumber>4.2.2.2</ecNumber>
    </recommendedName>
    <alternativeName>
        <fullName>Antigen Amb a I</fullName>
    </alternativeName>
    <alternativeName>
        <fullName>Antigen E</fullName>
        <shortName>AgE</shortName>
    </alternativeName>
    <alternativeName>
        <fullName>Pollen allergen Amb a 1.3</fullName>
    </alternativeName>
    <allergenName>Amb a 1.3</allergenName>
</protein>
<name>PLY2_AMBAR</name>
<proteinExistence type="evidence at protein level"/>
<reference key="1">
    <citation type="journal article" date="1991" name="J. Biol. Chem.">
        <title>Cloning of Amb a I (antigen E), the major allergen family of short ragweed pollen.</title>
        <authorList>
            <person name="Rafnar T."/>
            <person name="Griffith I.J."/>
            <person name="Kuo M.-C."/>
            <person name="Bond J.F."/>
            <person name="Rogers B.L."/>
            <person name="Klapper D.G."/>
        </authorList>
    </citation>
    <scope>NUCLEOTIDE SEQUENCE [MRNA]</scope>
    <scope>ALLERGEN</scope>
    <source>
        <tissue>Pollen</tissue>
    </source>
</reference>
<reference key="2">
    <citation type="journal article" date="1991" name="Int. Arch. Allergy Appl. Immunol.">
        <title>Sequence polymorphism of Amb a I and Amb a II, the major allergens in Ambrosia artemisiifolia (short ragweed).</title>
        <authorList>
            <person name="Griffith I.J."/>
            <person name="Pollock J."/>
            <person name="Klapper D.G."/>
            <person name="Rogers B.L."/>
            <person name="Nault A.K."/>
        </authorList>
    </citation>
    <scope>NUCLEOTIDE SEQUENCE [MRNA]</scope>
    <scope>VARIANTS</scope>
    <source>
        <tissue>Pollen</tissue>
    </source>
</reference>
<feature type="signal peptide" evidence="2">
    <location>
        <begin position="1"/>
        <end position="25"/>
    </location>
</feature>
<feature type="chain" id="PRO_0000024903" description="Pectate lyase 2">
    <location>
        <begin position="26"/>
        <end position="397"/>
    </location>
</feature>
<feature type="active site" evidence="2">
    <location>
        <position position="274"/>
    </location>
</feature>
<feature type="binding site" evidence="1">
    <location>
        <position position="194"/>
    </location>
    <ligand>
        <name>Ca(2+)</name>
        <dbReference type="ChEBI" id="CHEBI:29108"/>
    </ligand>
</feature>
<feature type="binding site" evidence="1">
    <location>
        <position position="218"/>
    </location>
    <ligand>
        <name>Ca(2+)</name>
        <dbReference type="ChEBI" id="CHEBI:29108"/>
    </ligand>
</feature>
<feature type="binding site" evidence="1">
    <location>
        <position position="222"/>
    </location>
    <ligand>
        <name>Ca(2+)</name>
        <dbReference type="ChEBI" id="CHEBI:29108"/>
    </ligand>
</feature>
<feature type="glycosylation site" description="N-linked (GlcNAc...) asparagine" evidence="2">
    <location>
        <position position="37"/>
    </location>
</feature>
<feature type="disulfide bond" evidence="1">
    <location>
        <begin position="54"/>
        <end position="71"/>
    </location>
</feature>
<feature type="sequence variant">
    <original>L</original>
    <variation>Y</variation>
    <location>
        <position position="48"/>
    </location>
</feature>
<organism>
    <name type="scientific">Ambrosia artemisiifolia</name>
    <name type="common">Common ragweed</name>
    <dbReference type="NCBI Taxonomy" id="4212"/>
    <lineage>
        <taxon>Eukaryota</taxon>
        <taxon>Viridiplantae</taxon>
        <taxon>Streptophyta</taxon>
        <taxon>Embryophyta</taxon>
        <taxon>Tracheophyta</taxon>
        <taxon>Spermatophyta</taxon>
        <taxon>Magnoliopsida</taxon>
        <taxon>eudicotyledons</taxon>
        <taxon>Gunneridae</taxon>
        <taxon>Pentapetalae</taxon>
        <taxon>asterids</taxon>
        <taxon>campanulids</taxon>
        <taxon>Asterales</taxon>
        <taxon>Asteraceae</taxon>
        <taxon>Asteroideae</taxon>
        <taxon>Heliantheae alliance</taxon>
        <taxon>Heliantheae</taxon>
        <taxon>Ambrosia</taxon>
    </lineage>
</organism>